<comment type="function">
    <text evidence="1">This protein is one of the early assembly proteins of the 50S ribosomal subunit, although it is not seen to bind rRNA by itself. It is important during the early stages of 50S assembly.</text>
</comment>
<comment type="subunit">
    <text evidence="1">Part of the 50S ribosomal subunit.</text>
</comment>
<comment type="similarity">
    <text evidence="1">Belongs to the universal ribosomal protein uL13 family.</text>
</comment>
<accession>Q1CV70</accession>
<gene>
    <name evidence="1" type="primary">rplM</name>
    <name type="ordered locus">HPAG1_0085</name>
</gene>
<keyword id="KW-0687">Ribonucleoprotein</keyword>
<keyword id="KW-0689">Ribosomal protein</keyword>
<organism>
    <name type="scientific">Helicobacter pylori (strain HPAG1)</name>
    <dbReference type="NCBI Taxonomy" id="357544"/>
    <lineage>
        <taxon>Bacteria</taxon>
        <taxon>Pseudomonadati</taxon>
        <taxon>Campylobacterota</taxon>
        <taxon>Epsilonproteobacteria</taxon>
        <taxon>Campylobacterales</taxon>
        <taxon>Helicobacteraceae</taxon>
        <taxon>Helicobacter</taxon>
    </lineage>
</organism>
<proteinExistence type="inferred from homology"/>
<dbReference type="EMBL" id="CP000241">
    <property type="protein sequence ID" value="ABF84152.1"/>
    <property type="molecule type" value="Genomic_DNA"/>
</dbReference>
<dbReference type="RefSeq" id="WP_000167675.1">
    <property type="nucleotide sequence ID" value="NC_008086.1"/>
</dbReference>
<dbReference type="SMR" id="Q1CV70"/>
<dbReference type="GeneID" id="93236455"/>
<dbReference type="KEGG" id="hpa:HPAG1_0085"/>
<dbReference type="HOGENOM" id="CLU_082184_2_2_7"/>
<dbReference type="GO" id="GO:0022625">
    <property type="term" value="C:cytosolic large ribosomal subunit"/>
    <property type="evidence" value="ECO:0007669"/>
    <property type="project" value="TreeGrafter"/>
</dbReference>
<dbReference type="GO" id="GO:0003729">
    <property type="term" value="F:mRNA binding"/>
    <property type="evidence" value="ECO:0007669"/>
    <property type="project" value="TreeGrafter"/>
</dbReference>
<dbReference type="GO" id="GO:0003735">
    <property type="term" value="F:structural constituent of ribosome"/>
    <property type="evidence" value="ECO:0007669"/>
    <property type="project" value="InterPro"/>
</dbReference>
<dbReference type="GO" id="GO:0017148">
    <property type="term" value="P:negative regulation of translation"/>
    <property type="evidence" value="ECO:0007669"/>
    <property type="project" value="TreeGrafter"/>
</dbReference>
<dbReference type="GO" id="GO:0006412">
    <property type="term" value="P:translation"/>
    <property type="evidence" value="ECO:0007669"/>
    <property type="project" value="UniProtKB-UniRule"/>
</dbReference>
<dbReference type="CDD" id="cd00392">
    <property type="entry name" value="Ribosomal_L13"/>
    <property type="match status" value="1"/>
</dbReference>
<dbReference type="FunFam" id="3.90.1180.10:FF:000004">
    <property type="entry name" value="50S ribosomal protein L13"/>
    <property type="match status" value="1"/>
</dbReference>
<dbReference type="Gene3D" id="3.90.1180.10">
    <property type="entry name" value="Ribosomal protein L13"/>
    <property type="match status" value="1"/>
</dbReference>
<dbReference type="HAMAP" id="MF_01366">
    <property type="entry name" value="Ribosomal_uL13"/>
    <property type="match status" value="1"/>
</dbReference>
<dbReference type="InterPro" id="IPR005822">
    <property type="entry name" value="Ribosomal_uL13"/>
</dbReference>
<dbReference type="InterPro" id="IPR005823">
    <property type="entry name" value="Ribosomal_uL13_bac-type"/>
</dbReference>
<dbReference type="InterPro" id="IPR023563">
    <property type="entry name" value="Ribosomal_uL13_CS"/>
</dbReference>
<dbReference type="InterPro" id="IPR036899">
    <property type="entry name" value="Ribosomal_uL13_sf"/>
</dbReference>
<dbReference type="NCBIfam" id="TIGR01066">
    <property type="entry name" value="rplM_bact"/>
    <property type="match status" value="1"/>
</dbReference>
<dbReference type="PANTHER" id="PTHR11545:SF2">
    <property type="entry name" value="LARGE RIBOSOMAL SUBUNIT PROTEIN UL13M"/>
    <property type="match status" value="1"/>
</dbReference>
<dbReference type="PANTHER" id="PTHR11545">
    <property type="entry name" value="RIBOSOMAL PROTEIN L13"/>
    <property type="match status" value="1"/>
</dbReference>
<dbReference type="Pfam" id="PF00572">
    <property type="entry name" value="Ribosomal_L13"/>
    <property type="match status" value="1"/>
</dbReference>
<dbReference type="PIRSF" id="PIRSF002181">
    <property type="entry name" value="Ribosomal_L13"/>
    <property type="match status" value="1"/>
</dbReference>
<dbReference type="SUPFAM" id="SSF52161">
    <property type="entry name" value="Ribosomal protein L13"/>
    <property type="match status" value="1"/>
</dbReference>
<dbReference type="PROSITE" id="PS00783">
    <property type="entry name" value="RIBOSOMAL_L13"/>
    <property type="match status" value="1"/>
</dbReference>
<name>RL13_HELPH</name>
<sequence>MTKTAKVNDIVRDWVVLDAKDKVFGRLITEIAVLLRGKHRPFYTPNVDCGDFVVVINANKVKFSGMKLEDKEYFTHSGYFGSTKSKTLQEMLEKTPEKLYHLAVRGMLPKTKLGKAMIKKLKVYRDDKHPHTAQTSKKDAK</sequence>
<reference key="1">
    <citation type="journal article" date="2006" name="Proc. Natl. Acad. Sci. U.S.A.">
        <title>The complete genome sequence of a chronic atrophic gastritis Helicobacter pylori strain: evolution during disease progression.</title>
        <authorList>
            <person name="Oh J.D."/>
            <person name="Kling-Baeckhed H."/>
            <person name="Giannakis M."/>
            <person name="Xu J."/>
            <person name="Fulton R.S."/>
            <person name="Fulton L.A."/>
            <person name="Cordum H.S."/>
            <person name="Wang C."/>
            <person name="Elliott G."/>
            <person name="Edwards J."/>
            <person name="Mardis E.R."/>
            <person name="Engstrand L.G."/>
            <person name="Gordon J.I."/>
        </authorList>
    </citation>
    <scope>NUCLEOTIDE SEQUENCE [LARGE SCALE GENOMIC DNA]</scope>
    <source>
        <strain>HPAG1</strain>
    </source>
</reference>
<feature type="chain" id="PRO_1000055392" description="Large ribosomal subunit protein uL13">
    <location>
        <begin position="1"/>
        <end position="141"/>
    </location>
</feature>
<protein>
    <recommendedName>
        <fullName evidence="1">Large ribosomal subunit protein uL13</fullName>
    </recommendedName>
    <alternativeName>
        <fullName evidence="2">50S ribosomal protein L13</fullName>
    </alternativeName>
</protein>
<evidence type="ECO:0000255" key="1">
    <source>
        <dbReference type="HAMAP-Rule" id="MF_01366"/>
    </source>
</evidence>
<evidence type="ECO:0000305" key="2"/>